<feature type="chain" id="PRO_0000081275" description="Response regulator protein VraR">
    <location>
        <begin position="1"/>
        <end position="209"/>
    </location>
</feature>
<feature type="domain" description="Response regulatory" evidence="2">
    <location>
        <begin position="4"/>
        <end position="120"/>
    </location>
</feature>
<feature type="domain" description="HTH luxR-type" evidence="3">
    <location>
        <begin position="141"/>
        <end position="206"/>
    </location>
</feature>
<feature type="DNA-binding region" description="H-T-H motif" evidence="3">
    <location>
        <begin position="165"/>
        <end position="184"/>
    </location>
</feature>
<feature type="modified residue" description="4-aspartylphosphate" evidence="2">
    <location>
        <position position="55"/>
    </location>
</feature>
<organism>
    <name type="scientific">Staphylococcus epidermidis (strain ATCC 35984 / DSM 28319 / BCRC 17069 / CCUG 31568 / BM 3577 / RP62A)</name>
    <dbReference type="NCBI Taxonomy" id="176279"/>
    <lineage>
        <taxon>Bacteria</taxon>
        <taxon>Bacillati</taxon>
        <taxon>Bacillota</taxon>
        <taxon>Bacilli</taxon>
        <taxon>Bacillales</taxon>
        <taxon>Staphylococcaceae</taxon>
        <taxon>Staphylococcus</taxon>
    </lineage>
</organism>
<comment type="function">
    <text evidence="1">Member of the two-component regulatory system VraS/VraR involved in the control of the cell wall peptidoglycan biosynthesis.</text>
</comment>
<comment type="subcellular location">
    <subcellularLocation>
        <location evidence="4">Cytoplasm</location>
    </subcellularLocation>
</comment>
<comment type="PTM">
    <text evidence="4">Phosphorylated by VraS.</text>
</comment>
<proteinExistence type="inferred from homology"/>
<sequence>MAIKVLFVDDHEMVRIGISSYLSTQEDIEVVGEGASGKDAITKAHELKPDLILMDLLMDDMDGVEATTEIKKDLPQIKVVMLTSFIEDKEVYRALDSGVDSYILKTTSASDIADAVRKTYEGESVFEPEVLVKMRNRMKKRAELYEMLTEREMEILLLIAKGYSNQEIASASHITIKTVKTHVSNILSKLEVQDRTQAVIYAFQHNLIQ</sequence>
<accession>Q5HN50</accession>
<dbReference type="EMBL" id="CP000029">
    <property type="protein sequence ID" value="AAW54786.1"/>
    <property type="molecule type" value="Genomic_DNA"/>
</dbReference>
<dbReference type="RefSeq" id="WP_001830439.1">
    <property type="nucleotide sequence ID" value="NC_002976.3"/>
</dbReference>
<dbReference type="SMR" id="Q5HN50"/>
<dbReference type="STRING" id="176279.SERP1422"/>
<dbReference type="GeneID" id="50018331"/>
<dbReference type="KEGG" id="ser:SERP1422"/>
<dbReference type="eggNOG" id="COG2197">
    <property type="taxonomic scope" value="Bacteria"/>
</dbReference>
<dbReference type="HOGENOM" id="CLU_000445_90_10_9"/>
<dbReference type="Proteomes" id="UP000000531">
    <property type="component" value="Chromosome"/>
</dbReference>
<dbReference type="GO" id="GO:0005737">
    <property type="term" value="C:cytoplasm"/>
    <property type="evidence" value="ECO:0007669"/>
    <property type="project" value="UniProtKB-SubCell"/>
</dbReference>
<dbReference type="GO" id="GO:0003677">
    <property type="term" value="F:DNA binding"/>
    <property type="evidence" value="ECO:0007669"/>
    <property type="project" value="UniProtKB-KW"/>
</dbReference>
<dbReference type="GO" id="GO:0000160">
    <property type="term" value="P:phosphorelay signal transduction system"/>
    <property type="evidence" value="ECO:0007669"/>
    <property type="project" value="UniProtKB-KW"/>
</dbReference>
<dbReference type="GO" id="GO:0006355">
    <property type="term" value="P:regulation of DNA-templated transcription"/>
    <property type="evidence" value="ECO:0007669"/>
    <property type="project" value="InterPro"/>
</dbReference>
<dbReference type="CDD" id="cd06170">
    <property type="entry name" value="LuxR_C_like"/>
    <property type="match status" value="1"/>
</dbReference>
<dbReference type="CDD" id="cd17535">
    <property type="entry name" value="REC_NarL-like"/>
    <property type="match status" value="1"/>
</dbReference>
<dbReference type="Gene3D" id="3.40.50.2300">
    <property type="match status" value="1"/>
</dbReference>
<dbReference type="InterPro" id="IPR011006">
    <property type="entry name" value="CheY-like_superfamily"/>
</dbReference>
<dbReference type="InterPro" id="IPR016032">
    <property type="entry name" value="Sig_transdc_resp-reg_C-effctor"/>
</dbReference>
<dbReference type="InterPro" id="IPR001789">
    <property type="entry name" value="Sig_transdc_resp-reg_receiver"/>
</dbReference>
<dbReference type="InterPro" id="IPR000792">
    <property type="entry name" value="Tscrpt_reg_LuxR_C"/>
</dbReference>
<dbReference type="InterPro" id="IPR039420">
    <property type="entry name" value="WalR-like"/>
</dbReference>
<dbReference type="PANTHER" id="PTHR43214:SF37">
    <property type="entry name" value="TRANSCRIPTIONAL REGULATORY PROTEIN YDFI"/>
    <property type="match status" value="1"/>
</dbReference>
<dbReference type="PANTHER" id="PTHR43214">
    <property type="entry name" value="TWO-COMPONENT RESPONSE REGULATOR"/>
    <property type="match status" value="1"/>
</dbReference>
<dbReference type="Pfam" id="PF00196">
    <property type="entry name" value="GerE"/>
    <property type="match status" value="1"/>
</dbReference>
<dbReference type="Pfam" id="PF00072">
    <property type="entry name" value="Response_reg"/>
    <property type="match status" value="1"/>
</dbReference>
<dbReference type="PRINTS" id="PR00038">
    <property type="entry name" value="HTHLUXR"/>
</dbReference>
<dbReference type="SMART" id="SM00421">
    <property type="entry name" value="HTH_LUXR"/>
    <property type="match status" value="1"/>
</dbReference>
<dbReference type="SMART" id="SM00448">
    <property type="entry name" value="REC"/>
    <property type="match status" value="1"/>
</dbReference>
<dbReference type="SUPFAM" id="SSF46894">
    <property type="entry name" value="C-terminal effector domain of the bipartite response regulators"/>
    <property type="match status" value="1"/>
</dbReference>
<dbReference type="SUPFAM" id="SSF52172">
    <property type="entry name" value="CheY-like"/>
    <property type="match status" value="1"/>
</dbReference>
<dbReference type="PROSITE" id="PS50043">
    <property type="entry name" value="HTH_LUXR_2"/>
    <property type="match status" value="1"/>
</dbReference>
<dbReference type="PROSITE" id="PS50110">
    <property type="entry name" value="RESPONSE_REGULATORY"/>
    <property type="match status" value="1"/>
</dbReference>
<name>VRAR_STAEQ</name>
<keyword id="KW-0010">Activator</keyword>
<keyword id="KW-0963">Cytoplasm</keyword>
<keyword id="KW-0238">DNA-binding</keyword>
<keyword id="KW-0597">Phosphoprotein</keyword>
<keyword id="KW-1185">Reference proteome</keyword>
<keyword id="KW-0804">Transcription</keyword>
<keyword id="KW-0805">Transcription regulation</keyword>
<keyword id="KW-0902">Two-component regulatory system</keyword>
<evidence type="ECO:0000250" key="1"/>
<evidence type="ECO:0000255" key="2">
    <source>
        <dbReference type="PROSITE-ProRule" id="PRU00169"/>
    </source>
</evidence>
<evidence type="ECO:0000255" key="3">
    <source>
        <dbReference type="PROSITE-ProRule" id="PRU00411"/>
    </source>
</evidence>
<evidence type="ECO:0000305" key="4"/>
<reference key="1">
    <citation type="journal article" date="2005" name="J. Bacteriol.">
        <title>Insights on evolution of virulence and resistance from the complete genome analysis of an early methicillin-resistant Staphylococcus aureus strain and a biofilm-producing methicillin-resistant Staphylococcus epidermidis strain.</title>
        <authorList>
            <person name="Gill S.R."/>
            <person name="Fouts D.E."/>
            <person name="Archer G.L."/>
            <person name="Mongodin E.F."/>
            <person name="DeBoy R.T."/>
            <person name="Ravel J."/>
            <person name="Paulsen I.T."/>
            <person name="Kolonay J.F."/>
            <person name="Brinkac L.M."/>
            <person name="Beanan M.J."/>
            <person name="Dodson R.J."/>
            <person name="Daugherty S.C."/>
            <person name="Madupu R."/>
            <person name="Angiuoli S.V."/>
            <person name="Durkin A.S."/>
            <person name="Haft D.H."/>
            <person name="Vamathevan J.J."/>
            <person name="Khouri H."/>
            <person name="Utterback T.R."/>
            <person name="Lee C."/>
            <person name="Dimitrov G."/>
            <person name="Jiang L."/>
            <person name="Qin H."/>
            <person name="Weidman J."/>
            <person name="Tran K."/>
            <person name="Kang K.H."/>
            <person name="Hance I.R."/>
            <person name="Nelson K.E."/>
            <person name="Fraser C.M."/>
        </authorList>
    </citation>
    <scope>NUCLEOTIDE SEQUENCE [LARGE SCALE GENOMIC DNA]</scope>
    <source>
        <strain>ATCC 35984 / DSM 28319 / BCRC 17069 / CCUG 31568 / BM 3577 / RP62A</strain>
    </source>
</reference>
<protein>
    <recommendedName>
        <fullName>Response regulator protein VraR</fullName>
    </recommendedName>
</protein>
<gene>
    <name type="primary">vraR</name>
    <name type="ordered locus">SERP1422</name>
</gene>